<dbReference type="EMBL" id="CP001014">
    <property type="protein sequence ID" value="ACB40021.1"/>
    <property type="molecule type" value="Genomic_DNA"/>
</dbReference>
<dbReference type="RefSeq" id="WP_012350440.1">
    <property type="nucleotide sequence ID" value="NC_010525.1"/>
</dbReference>
<dbReference type="SMR" id="B1YE08"/>
<dbReference type="STRING" id="444157.Tneu_1090"/>
<dbReference type="GeneID" id="6165525"/>
<dbReference type="KEGG" id="tne:Tneu_1090"/>
<dbReference type="eggNOG" id="arCOG01559">
    <property type="taxonomic scope" value="Archaea"/>
</dbReference>
<dbReference type="HOGENOM" id="CLU_002794_11_1_2"/>
<dbReference type="OrthoDB" id="6290at2157"/>
<dbReference type="Proteomes" id="UP000001694">
    <property type="component" value="Chromosome"/>
</dbReference>
<dbReference type="GO" id="GO:0005829">
    <property type="term" value="C:cytosol"/>
    <property type="evidence" value="ECO:0007669"/>
    <property type="project" value="TreeGrafter"/>
</dbReference>
<dbReference type="GO" id="GO:1990904">
    <property type="term" value="C:ribonucleoprotein complex"/>
    <property type="evidence" value="ECO:0007669"/>
    <property type="project" value="TreeGrafter"/>
</dbReference>
<dbReference type="GO" id="GO:0005525">
    <property type="term" value="F:GTP binding"/>
    <property type="evidence" value="ECO:0007669"/>
    <property type="project" value="UniProtKB-UniRule"/>
</dbReference>
<dbReference type="GO" id="GO:0003924">
    <property type="term" value="F:GTPase activity"/>
    <property type="evidence" value="ECO:0007669"/>
    <property type="project" value="InterPro"/>
</dbReference>
<dbReference type="GO" id="GO:0003746">
    <property type="term" value="F:translation elongation factor activity"/>
    <property type="evidence" value="ECO:0007669"/>
    <property type="project" value="UniProtKB-UniRule"/>
</dbReference>
<dbReference type="CDD" id="cd01681">
    <property type="entry name" value="aeEF2_snRNP_like_IV"/>
    <property type="match status" value="1"/>
</dbReference>
<dbReference type="CDD" id="cd01885">
    <property type="entry name" value="EF2"/>
    <property type="match status" value="1"/>
</dbReference>
<dbReference type="CDD" id="cd16268">
    <property type="entry name" value="EF2_II"/>
    <property type="match status" value="1"/>
</dbReference>
<dbReference type="CDD" id="cd16261">
    <property type="entry name" value="EF2_snRNP_III"/>
    <property type="match status" value="1"/>
</dbReference>
<dbReference type="CDD" id="cd01514">
    <property type="entry name" value="Elongation_Factor_C"/>
    <property type="match status" value="1"/>
</dbReference>
<dbReference type="FunFam" id="3.30.230.10:FF:000009">
    <property type="entry name" value="116 kDa U5 small nuclear ribonucleoprotein component"/>
    <property type="match status" value="1"/>
</dbReference>
<dbReference type="FunFam" id="3.30.70.240:FF:000010">
    <property type="entry name" value="Elongation factor 2"/>
    <property type="match status" value="1"/>
</dbReference>
<dbReference type="FunFam" id="3.30.70.870:FF:000002">
    <property type="entry name" value="Translation elongation factor 2"/>
    <property type="match status" value="1"/>
</dbReference>
<dbReference type="Gene3D" id="3.30.230.10">
    <property type="match status" value="1"/>
</dbReference>
<dbReference type="Gene3D" id="3.30.70.240">
    <property type="match status" value="1"/>
</dbReference>
<dbReference type="Gene3D" id="3.30.70.870">
    <property type="entry name" value="Elongation Factor G (Translational Gtpase), domain 3"/>
    <property type="match status" value="1"/>
</dbReference>
<dbReference type="Gene3D" id="3.40.50.300">
    <property type="entry name" value="P-loop containing nucleotide triphosphate hydrolases"/>
    <property type="match status" value="1"/>
</dbReference>
<dbReference type="Gene3D" id="2.40.30.10">
    <property type="entry name" value="Translation factors"/>
    <property type="match status" value="1"/>
</dbReference>
<dbReference type="HAMAP" id="MF_00054_A">
    <property type="entry name" value="EF_G_EF_2_A"/>
    <property type="match status" value="1"/>
</dbReference>
<dbReference type="InterPro" id="IPR041095">
    <property type="entry name" value="EFG_II"/>
</dbReference>
<dbReference type="InterPro" id="IPR035647">
    <property type="entry name" value="EFG_III/V"/>
</dbReference>
<dbReference type="InterPro" id="IPR000640">
    <property type="entry name" value="EFG_V-like"/>
</dbReference>
<dbReference type="InterPro" id="IPR004161">
    <property type="entry name" value="EFTu-like_2"/>
</dbReference>
<dbReference type="InterPro" id="IPR027417">
    <property type="entry name" value="P-loop_NTPase"/>
</dbReference>
<dbReference type="InterPro" id="IPR020568">
    <property type="entry name" value="Ribosomal_Su5_D2-typ_SF"/>
</dbReference>
<dbReference type="InterPro" id="IPR014721">
    <property type="entry name" value="Ribsml_uS5_D2-typ_fold_subgr"/>
</dbReference>
<dbReference type="InterPro" id="IPR005225">
    <property type="entry name" value="Small_GTP-bd"/>
</dbReference>
<dbReference type="InterPro" id="IPR000795">
    <property type="entry name" value="T_Tr_GTP-bd_dom"/>
</dbReference>
<dbReference type="InterPro" id="IPR009000">
    <property type="entry name" value="Transl_B-barrel_sf"/>
</dbReference>
<dbReference type="InterPro" id="IPR004543">
    <property type="entry name" value="Transl_elong_EFG/EF2_arc"/>
</dbReference>
<dbReference type="InterPro" id="IPR005517">
    <property type="entry name" value="Transl_elong_EFG/EF2_IV"/>
</dbReference>
<dbReference type="NCBIfam" id="TIGR00490">
    <property type="entry name" value="aEF-2"/>
    <property type="match status" value="1"/>
</dbReference>
<dbReference type="NCBIfam" id="TIGR00231">
    <property type="entry name" value="small_GTP"/>
    <property type="match status" value="1"/>
</dbReference>
<dbReference type="PANTHER" id="PTHR42908:SF3">
    <property type="entry name" value="ELONGATION FACTOR-LIKE GTPASE 1"/>
    <property type="match status" value="1"/>
</dbReference>
<dbReference type="PANTHER" id="PTHR42908">
    <property type="entry name" value="TRANSLATION ELONGATION FACTOR-RELATED"/>
    <property type="match status" value="1"/>
</dbReference>
<dbReference type="Pfam" id="PF00679">
    <property type="entry name" value="EFG_C"/>
    <property type="match status" value="1"/>
</dbReference>
<dbReference type="Pfam" id="PF14492">
    <property type="entry name" value="EFG_III"/>
    <property type="match status" value="1"/>
</dbReference>
<dbReference type="Pfam" id="PF03764">
    <property type="entry name" value="EFG_IV"/>
    <property type="match status" value="1"/>
</dbReference>
<dbReference type="Pfam" id="PF00009">
    <property type="entry name" value="GTP_EFTU"/>
    <property type="match status" value="1"/>
</dbReference>
<dbReference type="Pfam" id="PF03144">
    <property type="entry name" value="GTP_EFTU_D2"/>
    <property type="match status" value="1"/>
</dbReference>
<dbReference type="PRINTS" id="PR00315">
    <property type="entry name" value="ELONGATNFCT"/>
</dbReference>
<dbReference type="SMART" id="SM00838">
    <property type="entry name" value="EFG_C"/>
    <property type="match status" value="1"/>
</dbReference>
<dbReference type="SMART" id="SM00889">
    <property type="entry name" value="EFG_IV"/>
    <property type="match status" value="1"/>
</dbReference>
<dbReference type="SUPFAM" id="SSF54980">
    <property type="entry name" value="EF-G C-terminal domain-like"/>
    <property type="match status" value="2"/>
</dbReference>
<dbReference type="SUPFAM" id="SSF52540">
    <property type="entry name" value="P-loop containing nucleoside triphosphate hydrolases"/>
    <property type="match status" value="1"/>
</dbReference>
<dbReference type="SUPFAM" id="SSF54211">
    <property type="entry name" value="Ribosomal protein S5 domain 2-like"/>
    <property type="match status" value="1"/>
</dbReference>
<dbReference type="SUPFAM" id="SSF50447">
    <property type="entry name" value="Translation proteins"/>
    <property type="match status" value="1"/>
</dbReference>
<dbReference type="PROSITE" id="PS51722">
    <property type="entry name" value="G_TR_2"/>
    <property type="match status" value="1"/>
</dbReference>
<name>EF2_PYRNV</name>
<keyword id="KW-0963">Cytoplasm</keyword>
<keyword id="KW-0251">Elongation factor</keyword>
<keyword id="KW-0342">GTP-binding</keyword>
<keyword id="KW-0547">Nucleotide-binding</keyword>
<keyword id="KW-0648">Protein biosynthesis</keyword>
<comment type="function">
    <text evidence="1">Catalyzes the GTP-dependent ribosomal translocation step during translation elongation. During this step, the ribosome changes from the pre-translocational (PRE) to the post-translocational (POST) state as the newly formed A-site-bound peptidyl-tRNA and P-site-bound deacylated tRNA move to the P and E sites, respectively. Catalyzes the coordinated movement of the two tRNA molecules, the mRNA and conformational changes in the ribosome.</text>
</comment>
<comment type="subcellular location">
    <subcellularLocation>
        <location evidence="1">Cytoplasm</location>
    </subcellularLocation>
</comment>
<comment type="similarity">
    <text evidence="1">Belongs to the TRAFAC class translation factor GTPase superfamily. Classic translation factor GTPase family. EF-G/EF-2 subfamily.</text>
</comment>
<feature type="chain" id="PRO_1000091772" description="Elongation factor 2">
    <location>
        <begin position="1"/>
        <end position="740"/>
    </location>
</feature>
<feature type="domain" description="tr-type G">
    <location>
        <begin position="23"/>
        <end position="264"/>
    </location>
</feature>
<feature type="binding site" evidence="1">
    <location>
        <begin position="32"/>
        <end position="39"/>
    </location>
    <ligand>
        <name>GTP</name>
        <dbReference type="ChEBI" id="CHEBI:37565"/>
    </ligand>
</feature>
<feature type="binding site" evidence="1">
    <location>
        <begin position="98"/>
        <end position="102"/>
    </location>
    <ligand>
        <name>GTP</name>
        <dbReference type="ChEBI" id="CHEBI:37565"/>
    </ligand>
</feature>
<feature type="binding site" evidence="1">
    <location>
        <begin position="152"/>
        <end position="155"/>
    </location>
    <ligand>
        <name>GTP</name>
        <dbReference type="ChEBI" id="CHEBI:37565"/>
    </ligand>
</feature>
<feature type="modified residue" description="Diphthamide" evidence="1">
    <location>
        <position position="605"/>
    </location>
</feature>
<reference key="1">
    <citation type="submission" date="2008-03" db="EMBL/GenBank/DDBJ databases">
        <title>Complete sequence of Thermoproteus neutrophilus V24Sta.</title>
        <authorList>
            <consortium name="US DOE Joint Genome Institute"/>
            <person name="Copeland A."/>
            <person name="Lucas S."/>
            <person name="Lapidus A."/>
            <person name="Glavina del Rio T."/>
            <person name="Dalin E."/>
            <person name="Tice H."/>
            <person name="Bruce D."/>
            <person name="Goodwin L."/>
            <person name="Pitluck S."/>
            <person name="Sims D."/>
            <person name="Brettin T."/>
            <person name="Detter J.C."/>
            <person name="Han C."/>
            <person name="Kuske C.R."/>
            <person name="Schmutz J."/>
            <person name="Larimer F."/>
            <person name="Land M."/>
            <person name="Hauser L."/>
            <person name="Kyrpides N."/>
            <person name="Mikhailova N."/>
            <person name="Biddle J.F."/>
            <person name="Zhang Z."/>
            <person name="Fitz-Gibbon S.T."/>
            <person name="Lowe T.M."/>
            <person name="Saltikov C."/>
            <person name="House C.H."/>
            <person name="Richardson P."/>
        </authorList>
    </citation>
    <scope>NUCLEOTIDE SEQUENCE [LARGE SCALE GENOMIC DNA]</scope>
    <source>
        <strain>DSM 2338 / JCM 9278 / NBRC 100436 / V24Sta</strain>
    </source>
</reference>
<evidence type="ECO:0000255" key="1">
    <source>
        <dbReference type="HAMAP-Rule" id="MF_00054"/>
    </source>
</evidence>
<sequence length="740" mass="83056">MSSAVRVVEKQLDEILAIARNPAQIRNAGTLAHVDHGKTTTSDSLLMGAGLLSPKVAGKALAMDYVPIEQLRQMTVKAANISLYFEYGGKPYLINFVDTPGHVDFTGHVTRSLRVMDGGLVVVDAVEGVMTQTETVVRQALEEYVRPVLFINKIDRLIKELRLSPQEIQQRILTIVKDFNALIDMFAPPEFKDKWKVDPGKGQMAMGSALHKWGITIPMAQKAGIKFSNIVDAYEKGYVDQLAQEFPLYKTLLTMIIEHVPPPNVAQKYRIPRLWRGDLNSEIGKALLEADPNGPTVIAVSKVNKDPHAGLIATGRVFSGTIREGDEIYIIGRKMKKKVLQTYIYMGPSRIIVPYMPAGNIVALMGVDEARAGDTLVDPRLSEIPPFEKMRYISEPVVTVAIEPKNPAELARLVEALKDLVIEDPTLDLKIDQETGQILLSGVGTLHLEIATWLLKERTKTEFTVSPPLIRFRETVRERSQVWEGKSPNKHNRLYFYVEPLDETTIELIATREITEDQDPRERAKILREKAGWDADEARGIWAIDDRFFNLIVDRTSGIQYLREIRDYIVQGFRWATEAGPLAQEPMRGLKVVLTDAVVHEDPAHRGPAQIMPATKNAIFAAVLSARPTILEPLMKLDIKVAPDYIGAVTSVLNKHRGKILDMTQQEYMAYLRAELPVLESFTISDELRAAAAGKIFWSMQFSRWAPMPESILADMVKQLRKKKGLKEEIPKPTDFVEAF</sequence>
<organism>
    <name type="scientific">Pyrobaculum neutrophilum (strain DSM 2338 / JCM 9278 / NBRC 100436 / V24Sta)</name>
    <name type="common">Thermoproteus neutrophilus</name>
    <dbReference type="NCBI Taxonomy" id="444157"/>
    <lineage>
        <taxon>Archaea</taxon>
        <taxon>Thermoproteota</taxon>
        <taxon>Thermoprotei</taxon>
        <taxon>Thermoproteales</taxon>
        <taxon>Thermoproteaceae</taxon>
        <taxon>Pyrobaculum</taxon>
    </lineage>
</organism>
<protein>
    <recommendedName>
        <fullName evidence="1">Elongation factor 2</fullName>
        <shortName evidence="1">EF-2</shortName>
    </recommendedName>
</protein>
<accession>B1YE08</accession>
<gene>
    <name evidence="1" type="primary">fusA</name>
    <name type="ordered locus">Tneu_1090</name>
</gene>
<proteinExistence type="inferred from homology"/>